<keyword id="KW-0030">Aminoacyl-tRNA synthetase</keyword>
<keyword id="KW-0067">ATP-binding</keyword>
<keyword id="KW-0963">Cytoplasm</keyword>
<keyword id="KW-0436">Ligase</keyword>
<keyword id="KW-0547">Nucleotide-binding</keyword>
<keyword id="KW-0648">Protein biosynthesis</keyword>
<accession>B2S075</accession>
<comment type="function">
    <text evidence="1">Catalyzes the attachment of glycine to tRNA(Gly).</text>
</comment>
<comment type="catalytic activity">
    <reaction evidence="1">
        <text>tRNA(Gly) + glycine + ATP = glycyl-tRNA(Gly) + AMP + diphosphate</text>
        <dbReference type="Rhea" id="RHEA:16013"/>
        <dbReference type="Rhea" id="RHEA-COMP:9664"/>
        <dbReference type="Rhea" id="RHEA-COMP:9683"/>
        <dbReference type="ChEBI" id="CHEBI:30616"/>
        <dbReference type="ChEBI" id="CHEBI:33019"/>
        <dbReference type="ChEBI" id="CHEBI:57305"/>
        <dbReference type="ChEBI" id="CHEBI:78442"/>
        <dbReference type="ChEBI" id="CHEBI:78522"/>
        <dbReference type="ChEBI" id="CHEBI:456215"/>
        <dbReference type="EC" id="6.1.1.14"/>
    </reaction>
</comment>
<comment type="subunit">
    <text evidence="1">Homodimer.</text>
</comment>
<comment type="subcellular location">
    <subcellularLocation>
        <location evidence="1">Cytoplasm</location>
    </subcellularLocation>
</comment>
<comment type="similarity">
    <text evidence="1">Belongs to the class-II aminoacyl-tRNA synthetase family.</text>
</comment>
<feature type="chain" id="PRO_1000101166" description="Glycine--tRNA ligase">
    <location>
        <begin position="1"/>
        <end position="445"/>
    </location>
</feature>
<feature type="binding site" evidence="1">
    <location>
        <position position="97"/>
    </location>
    <ligand>
        <name>substrate</name>
    </ligand>
</feature>
<feature type="binding site" evidence="1">
    <location>
        <position position="145"/>
    </location>
    <ligand>
        <name>substrate</name>
    </ligand>
</feature>
<feature type="binding site" evidence="1">
    <location>
        <begin position="177"/>
        <end position="179"/>
    </location>
    <ligand>
        <name>ATP</name>
        <dbReference type="ChEBI" id="CHEBI:30616"/>
    </ligand>
</feature>
<feature type="binding site" evidence="1">
    <location>
        <begin position="187"/>
        <end position="192"/>
    </location>
    <ligand>
        <name>ATP</name>
        <dbReference type="ChEBI" id="CHEBI:30616"/>
    </ligand>
</feature>
<feature type="binding site" evidence="1">
    <location>
        <begin position="192"/>
        <end position="196"/>
    </location>
    <ligand>
        <name>substrate</name>
    </ligand>
</feature>
<feature type="binding site" evidence="1">
    <location>
        <begin position="262"/>
        <end position="263"/>
    </location>
    <ligand>
        <name>ATP</name>
        <dbReference type="ChEBI" id="CHEBI:30616"/>
    </ligand>
</feature>
<feature type="binding site" evidence="1">
    <location>
        <begin position="304"/>
        <end position="308"/>
    </location>
    <ligand>
        <name>substrate</name>
    </ligand>
</feature>
<feature type="binding site" evidence="1">
    <location>
        <begin position="308"/>
        <end position="311"/>
    </location>
    <ligand>
        <name>ATP</name>
        <dbReference type="ChEBI" id="CHEBI:30616"/>
    </ligand>
</feature>
<sequence>MIRIEDIISLAKRKGFVFQSSEVYGGLSGVWDYGPLGIELKQNIQKEWWKNMVYSHENVVGLDSSILMRSEVWTASGHVESFAELLVDCKNCKNRFKIDSIDFSKGCPNCNSMGTFTDPRSFDLMFKTNIGAVEDSSNEIYLRPETAQGIFVNFRNVLDSTRLKVPFGIAQVGKAFRNEIVAKNFIFRTCEFEQMEMQFFVHPNQMDDWYYYWQQKRLNFFIEILGIKSDNLRFKEHKGDELAHYAKAAIDIEYKFPFGFQEIEGIHNRGNYDLSQHAKFCGKPKLFEYHDLISGDRYIPYVIETSLGLTRSVLMTLCDAYAHEELEGGDKRIVLRLHPKIAPYKVAILPLVKKDGLPELARKVFMQFSDDFYMFYDDNGTIGKRYRRQDEIGTPYCVTVDYDSIENKTVTLRHRDTMTQVRIPINDLYSYVRTEILNYKGVSDR</sequence>
<evidence type="ECO:0000255" key="1">
    <source>
        <dbReference type="HAMAP-Rule" id="MF_00253"/>
    </source>
</evidence>
<organism>
    <name type="scientific">Borrelia hermsii (strain HS1 / DAH)</name>
    <dbReference type="NCBI Taxonomy" id="314723"/>
    <lineage>
        <taxon>Bacteria</taxon>
        <taxon>Pseudomonadati</taxon>
        <taxon>Spirochaetota</taxon>
        <taxon>Spirochaetia</taxon>
        <taxon>Spirochaetales</taxon>
        <taxon>Borreliaceae</taxon>
        <taxon>Borrelia</taxon>
    </lineage>
</organism>
<name>SYG_BORHD</name>
<protein>
    <recommendedName>
        <fullName evidence="1">Glycine--tRNA ligase</fullName>
        <ecNumber evidence="1">6.1.1.14</ecNumber>
    </recommendedName>
    <alternativeName>
        <fullName evidence="1">Glycyl-tRNA synthetase</fullName>
        <shortName evidence="1">GlyRS</shortName>
    </alternativeName>
</protein>
<dbReference type="EC" id="6.1.1.14" evidence="1"/>
<dbReference type="EMBL" id="CP000048">
    <property type="protein sequence ID" value="AAX16881.1"/>
    <property type="molecule type" value="Genomic_DNA"/>
</dbReference>
<dbReference type="RefSeq" id="WP_012422138.1">
    <property type="nucleotide sequence ID" value="NZ_CP073136.1"/>
</dbReference>
<dbReference type="SMR" id="B2S075"/>
<dbReference type="KEGG" id="bhr:BH0371"/>
<dbReference type="HOGENOM" id="CLU_015515_2_1_12"/>
<dbReference type="Proteomes" id="UP000008834">
    <property type="component" value="Chromosome"/>
</dbReference>
<dbReference type="GO" id="GO:0005737">
    <property type="term" value="C:cytoplasm"/>
    <property type="evidence" value="ECO:0007669"/>
    <property type="project" value="UniProtKB-SubCell"/>
</dbReference>
<dbReference type="GO" id="GO:0005524">
    <property type="term" value="F:ATP binding"/>
    <property type="evidence" value="ECO:0007669"/>
    <property type="project" value="UniProtKB-UniRule"/>
</dbReference>
<dbReference type="GO" id="GO:0004820">
    <property type="term" value="F:glycine-tRNA ligase activity"/>
    <property type="evidence" value="ECO:0000250"/>
    <property type="project" value="UniProtKB"/>
</dbReference>
<dbReference type="GO" id="GO:0046983">
    <property type="term" value="F:protein dimerization activity"/>
    <property type="evidence" value="ECO:0000250"/>
    <property type="project" value="UniProtKB"/>
</dbReference>
<dbReference type="GO" id="GO:0006426">
    <property type="term" value="P:glycyl-tRNA aminoacylation"/>
    <property type="evidence" value="ECO:0007669"/>
    <property type="project" value="UniProtKB-UniRule"/>
</dbReference>
<dbReference type="CDD" id="cd00774">
    <property type="entry name" value="GlyRS-like_core"/>
    <property type="match status" value="1"/>
</dbReference>
<dbReference type="CDD" id="cd00858">
    <property type="entry name" value="GlyRS_anticodon"/>
    <property type="match status" value="1"/>
</dbReference>
<dbReference type="FunFam" id="3.40.50.800:FF:000002">
    <property type="entry name" value="Glycine--tRNA ligase"/>
    <property type="match status" value="1"/>
</dbReference>
<dbReference type="Gene3D" id="3.40.50.800">
    <property type="entry name" value="Anticodon-binding domain"/>
    <property type="match status" value="1"/>
</dbReference>
<dbReference type="Gene3D" id="3.30.930.10">
    <property type="entry name" value="Bira Bifunctional Protein, Domain 2"/>
    <property type="match status" value="1"/>
</dbReference>
<dbReference type="HAMAP" id="MF_00253_B">
    <property type="entry name" value="Gly_tRNA_synth_B"/>
    <property type="match status" value="1"/>
</dbReference>
<dbReference type="InterPro" id="IPR002314">
    <property type="entry name" value="aa-tRNA-synt_IIb"/>
</dbReference>
<dbReference type="InterPro" id="IPR006195">
    <property type="entry name" value="aa-tRNA-synth_II"/>
</dbReference>
<dbReference type="InterPro" id="IPR045864">
    <property type="entry name" value="aa-tRNA-synth_II/BPL/LPL"/>
</dbReference>
<dbReference type="InterPro" id="IPR004154">
    <property type="entry name" value="Anticodon-bd"/>
</dbReference>
<dbReference type="InterPro" id="IPR036621">
    <property type="entry name" value="Anticodon-bd_dom_sf"/>
</dbReference>
<dbReference type="InterPro" id="IPR027031">
    <property type="entry name" value="Gly-tRNA_synthase/POLG2"/>
</dbReference>
<dbReference type="InterPro" id="IPR022961">
    <property type="entry name" value="Gly_tRNA_ligase_bac"/>
</dbReference>
<dbReference type="InterPro" id="IPR033731">
    <property type="entry name" value="GlyRS-like_core"/>
</dbReference>
<dbReference type="InterPro" id="IPR002315">
    <property type="entry name" value="tRNA-synt_gly"/>
</dbReference>
<dbReference type="NCBIfam" id="TIGR00389">
    <property type="entry name" value="glyS_dimeric"/>
    <property type="match status" value="1"/>
</dbReference>
<dbReference type="NCBIfam" id="NF003211">
    <property type="entry name" value="PRK04173.1"/>
    <property type="match status" value="1"/>
</dbReference>
<dbReference type="PANTHER" id="PTHR10745:SF8">
    <property type="entry name" value="DNA POLYMERASE SUBUNIT GAMMA-2, MITOCHONDRIAL"/>
    <property type="match status" value="1"/>
</dbReference>
<dbReference type="PANTHER" id="PTHR10745">
    <property type="entry name" value="GLYCYL-TRNA SYNTHETASE/DNA POLYMERASE SUBUNIT GAMMA-2"/>
    <property type="match status" value="1"/>
</dbReference>
<dbReference type="Pfam" id="PF03129">
    <property type="entry name" value="HGTP_anticodon"/>
    <property type="match status" value="1"/>
</dbReference>
<dbReference type="Pfam" id="PF00587">
    <property type="entry name" value="tRNA-synt_2b"/>
    <property type="match status" value="1"/>
</dbReference>
<dbReference type="PRINTS" id="PR01043">
    <property type="entry name" value="TRNASYNTHGLY"/>
</dbReference>
<dbReference type="SUPFAM" id="SSF52954">
    <property type="entry name" value="Class II aaRS ABD-related"/>
    <property type="match status" value="1"/>
</dbReference>
<dbReference type="SUPFAM" id="SSF55681">
    <property type="entry name" value="Class II aaRS and biotin synthetases"/>
    <property type="match status" value="1"/>
</dbReference>
<dbReference type="PROSITE" id="PS50862">
    <property type="entry name" value="AA_TRNA_LIGASE_II"/>
    <property type="match status" value="1"/>
</dbReference>
<reference key="1">
    <citation type="submission" date="2004-12" db="EMBL/GenBank/DDBJ databases">
        <title>The genome sequence of Borrelia hermsii and Borrelia turicatae: comparative analysis of two agents of endemic N. America relapsing fever.</title>
        <authorList>
            <person name="Porcella S.F."/>
            <person name="Raffel S.J."/>
            <person name="Schrumpf M.E."/>
            <person name="Montgomery B."/>
            <person name="Smith T."/>
            <person name="Schwan T.G."/>
        </authorList>
    </citation>
    <scope>NUCLEOTIDE SEQUENCE [LARGE SCALE GENOMIC DNA]</scope>
    <source>
        <strain>HS1 / DAH</strain>
    </source>
</reference>
<proteinExistence type="inferred from homology"/>
<gene>
    <name evidence="1" type="primary">glyQS</name>
    <name type="ordered locus">BH0371</name>
</gene>